<protein>
    <recommendedName>
        <fullName>E3 ubiquitin-protein ligase RNF169</fullName>
        <ecNumber>2.3.2.27</ecNumber>
    </recommendedName>
    <alternativeName>
        <fullName>RING finger protein 169</fullName>
    </alternativeName>
    <alternativeName>
        <fullName evidence="4">RING-type E3 ubiquitin transferase RNF169</fullName>
    </alternativeName>
</protein>
<proteinExistence type="evidence at protein level"/>
<evidence type="ECO:0000250" key="1">
    <source>
        <dbReference type="UniProtKB" id="Q8NCN4"/>
    </source>
</evidence>
<evidence type="ECO:0000255" key="2">
    <source>
        <dbReference type="PROSITE-ProRule" id="PRU00175"/>
    </source>
</evidence>
<evidence type="ECO:0000256" key="3">
    <source>
        <dbReference type="SAM" id="MobiDB-lite"/>
    </source>
</evidence>
<evidence type="ECO:0000305" key="4"/>
<evidence type="ECO:0007744" key="5">
    <source>
    </source>
</evidence>
<keyword id="KW-0158">Chromosome</keyword>
<keyword id="KW-0227">DNA damage</keyword>
<keyword id="KW-0234">DNA repair</keyword>
<keyword id="KW-1017">Isopeptide bond</keyword>
<keyword id="KW-0479">Metal-binding</keyword>
<keyword id="KW-0539">Nucleus</keyword>
<keyword id="KW-0597">Phosphoprotein</keyword>
<keyword id="KW-1185">Reference proteome</keyword>
<keyword id="KW-0808">Transferase</keyword>
<keyword id="KW-0832">Ubl conjugation</keyword>
<keyword id="KW-0833">Ubl conjugation pathway</keyword>
<keyword id="KW-0862">Zinc</keyword>
<keyword id="KW-0863">Zinc-finger</keyword>
<feature type="chain" id="PRO_0000415820" description="E3 ubiquitin-protein ligase RNF169">
    <location>
        <begin position="1"/>
        <end position="694"/>
    </location>
</feature>
<feature type="zinc finger region" description="RING-type" evidence="2">
    <location>
        <begin position="61"/>
        <end position="97"/>
    </location>
</feature>
<feature type="region of interest" description="Disordered" evidence="3">
    <location>
        <begin position="1"/>
        <end position="46"/>
    </location>
</feature>
<feature type="region of interest" description="Disordered" evidence="3">
    <location>
        <begin position="100"/>
        <end position="153"/>
    </location>
</feature>
<feature type="region of interest" description="Disordered" evidence="3">
    <location>
        <begin position="515"/>
        <end position="537"/>
    </location>
</feature>
<feature type="short sequence motif" description="UMI motif">
    <location>
        <begin position="192"/>
        <end position="200"/>
    </location>
</feature>
<feature type="short sequence motif" description="MIU motif">
    <location>
        <begin position="651"/>
        <end position="668"/>
    </location>
</feature>
<feature type="short sequence motif" description="LR motif">
    <location>
        <begin position="675"/>
        <end position="687"/>
    </location>
</feature>
<feature type="compositionally biased region" description="Low complexity" evidence="3">
    <location>
        <begin position="1"/>
        <end position="20"/>
    </location>
</feature>
<feature type="compositionally biased region" description="Low complexity" evidence="3">
    <location>
        <begin position="33"/>
        <end position="46"/>
    </location>
</feature>
<feature type="compositionally biased region" description="Basic and acidic residues" evidence="3">
    <location>
        <begin position="119"/>
        <end position="137"/>
    </location>
</feature>
<feature type="modified residue" description="Phosphoserine" evidence="1">
    <location>
        <position position="12"/>
    </location>
</feature>
<feature type="modified residue" description="Phosphoserine" evidence="1">
    <location>
        <position position="234"/>
    </location>
</feature>
<feature type="modified residue" description="Phosphoserine" evidence="1">
    <location>
        <position position="236"/>
    </location>
</feature>
<feature type="modified residue" description="Phosphoserine" evidence="1">
    <location>
        <position position="326"/>
    </location>
</feature>
<feature type="modified residue" description="Phosphoserine" evidence="1">
    <location>
        <position position="390"/>
    </location>
</feature>
<feature type="modified residue" description="Phosphoserine" evidence="1">
    <location>
        <position position="396"/>
    </location>
</feature>
<feature type="modified residue" description="Phosphothreonine" evidence="1">
    <location>
        <position position="397"/>
    </location>
</feature>
<feature type="modified residue" description="Phosphoserine" evidence="1">
    <location>
        <position position="472"/>
    </location>
</feature>
<feature type="modified residue" description="Phosphothreonine" evidence="1">
    <location>
        <position position="541"/>
    </location>
</feature>
<feature type="modified residue" description="Phosphoserine" evidence="1">
    <location>
        <position position="630"/>
    </location>
</feature>
<feature type="modified residue" description="Phosphoserine" evidence="5">
    <location>
        <position position="679"/>
    </location>
</feature>
<feature type="cross-link" description="Glycyl lysine isopeptide (Lys-Gly) (interchain with G-Cter in SUMO2)" evidence="1">
    <location>
        <position position="273"/>
    </location>
</feature>
<feature type="cross-link" description="Glycyl lysine isopeptide (Lys-Gly) (interchain with G-Cter in SUMO2)" evidence="1">
    <location>
        <position position="349"/>
    </location>
</feature>
<feature type="cross-link" description="Glycyl lysine isopeptide (Lys-Gly) (interchain with G-Cter in SUMO2)" evidence="1">
    <location>
        <position position="498"/>
    </location>
</feature>
<dbReference type="EC" id="2.3.2.27"/>
<dbReference type="EMBL" id="AC113298">
    <property type="status" value="NOT_ANNOTATED_CDS"/>
    <property type="molecule type" value="Genomic_DNA"/>
</dbReference>
<dbReference type="EMBL" id="AK173319">
    <property type="protein sequence ID" value="BAD32597.1"/>
    <property type="molecule type" value="mRNA"/>
</dbReference>
<dbReference type="CCDS" id="CCDS52322.1"/>
<dbReference type="RefSeq" id="NP_780597.2">
    <property type="nucleotide sequence ID" value="NM_175388.3"/>
</dbReference>
<dbReference type="SMR" id="E9Q7F2"/>
<dbReference type="BioGRID" id="224481">
    <property type="interactions" value="5"/>
</dbReference>
<dbReference type="FunCoup" id="E9Q7F2">
    <property type="interactions" value="3449"/>
</dbReference>
<dbReference type="STRING" id="10090.ENSMUSP00000079631"/>
<dbReference type="GlyGen" id="E9Q7F2">
    <property type="glycosylation" value="1 site"/>
</dbReference>
<dbReference type="iPTMnet" id="E9Q7F2"/>
<dbReference type="PhosphoSitePlus" id="E9Q7F2"/>
<dbReference type="jPOST" id="E9Q7F2"/>
<dbReference type="PaxDb" id="10090-ENSMUSP00000079631"/>
<dbReference type="PeptideAtlas" id="E9Q7F2"/>
<dbReference type="ProteomicsDB" id="300444"/>
<dbReference type="Antibodypedia" id="31103">
    <property type="antibodies" value="80 antibodies from 19 providers"/>
</dbReference>
<dbReference type="Ensembl" id="ENSMUST00000080817.6">
    <property type="protein sequence ID" value="ENSMUSP00000079631.4"/>
    <property type="gene ID" value="ENSMUSG00000058761.6"/>
</dbReference>
<dbReference type="GeneID" id="108937"/>
<dbReference type="KEGG" id="mmu:108937"/>
<dbReference type="UCSC" id="uc009img.3">
    <property type="organism name" value="mouse"/>
</dbReference>
<dbReference type="AGR" id="MGI:1920257"/>
<dbReference type="CTD" id="254225"/>
<dbReference type="MGI" id="MGI:1920257">
    <property type="gene designation" value="Rnf169"/>
</dbReference>
<dbReference type="VEuPathDB" id="HostDB:ENSMUSG00000058761"/>
<dbReference type="eggNOG" id="ENOG502RJVX">
    <property type="taxonomic scope" value="Eukaryota"/>
</dbReference>
<dbReference type="GeneTree" id="ENSGT00940000153680"/>
<dbReference type="HOGENOM" id="CLU_024691_1_0_1"/>
<dbReference type="InParanoid" id="E9Q7F2"/>
<dbReference type="OMA" id="EFIFRAP"/>
<dbReference type="OrthoDB" id="8959987at2759"/>
<dbReference type="TreeFam" id="TF332796"/>
<dbReference type="UniPathway" id="UPA00143"/>
<dbReference type="BioGRID-ORCS" id="108937">
    <property type="hits" value="2 hits in 114 CRISPR screens"/>
</dbReference>
<dbReference type="ChiTaRS" id="Rnf169">
    <property type="organism name" value="mouse"/>
</dbReference>
<dbReference type="PRO" id="PR:E9Q7F2"/>
<dbReference type="Proteomes" id="UP000000589">
    <property type="component" value="Chromosome 7"/>
</dbReference>
<dbReference type="RNAct" id="E9Q7F2">
    <property type="molecule type" value="protein"/>
</dbReference>
<dbReference type="Bgee" id="ENSMUSG00000058761">
    <property type="expression patterns" value="Expressed in manus and 223 other cell types or tissues"/>
</dbReference>
<dbReference type="GO" id="GO:0005829">
    <property type="term" value="C:cytosol"/>
    <property type="evidence" value="ECO:0007669"/>
    <property type="project" value="Ensembl"/>
</dbReference>
<dbReference type="GO" id="GO:0016604">
    <property type="term" value="C:nuclear body"/>
    <property type="evidence" value="ECO:0007669"/>
    <property type="project" value="Ensembl"/>
</dbReference>
<dbReference type="GO" id="GO:0005730">
    <property type="term" value="C:nucleolus"/>
    <property type="evidence" value="ECO:0007669"/>
    <property type="project" value="Ensembl"/>
</dbReference>
<dbReference type="GO" id="GO:0005654">
    <property type="term" value="C:nucleoplasm"/>
    <property type="evidence" value="ECO:0000250"/>
    <property type="project" value="UniProtKB"/>
</dbReference>
<dbReference type="GO" id="GO:0005634">
    <property type="term" value="C:nucleus"/>
    <property type="evidence" value="ECO:0000250"/>
    <property type="project" value="UniProtKB"/>
</dbReference>
<dbReference type="GO" id="GO:0035861">
    <property type="term" value="C:site of double-strand break"/>
    <property type="evidence" value="ECO:0000250"/>
    <property type="project" value="UniProtKB"/>
</dbReference>
<dbReference type="GO" id="GO:0070530">
    <property type="term" value="F:K63-linked polyubiquitin modification-dependent protein binding"/>
    <property type="evidence" value="ECO:0000250"/>
    <property type="project" value="UniProtKB"/>
</dbReference>
<dbReference type="GO" id="GO:0031491">
    <property type="term" value="F:nucleosome binding"/>
    <property type="evidence" value="ECO:0000250"/>
    <property type="project" value="UniProtKB"/>
</dbReference>
<dbReference type="GO" id="GO:0016740">
    <property type="term" value="F:transferase activity"/>
    <property type="evidence" value="ECO:0007669"/>
    <property type="project" value="UniProtKB-KW"/>
</dbReference>
<dbReference type="GO" id="GO:0061649">
    <property type="term" value="F:ubiquitin-modified histone reader activity"/>
    <property type="evidence" value="ECO:0007669"/>
    <property type="project" value="Ensembl"/>
</dbReference>
<dbReference type="GO" id="GO:0008270">
    <property type="term" value="F:zinc ion binding"/>
    <property type="evidence" value="ECO:0007669"/>
    <property type="project" value="UniProtKB-KW"/>
</dbReference>
<dbReference type="GO" id="GO:0006974">
    <property type="term" value="P:DNA damage response"/>
    <property type="evidence" value="ECO:0000250"/>
    <property type="project" value="UniProtKB"/>
</dbReference>
<dbReference type="GO" id="GO:0000724">
    <property type="term" value="P:double-strand break repair via homologous recombination"/>
    <property type="evidence" value="ECO:0007669"/>
    <property type="project" value="Ensembl"/>
</dbReference>
<dbReference type="GO" id="GO:2000780">
    <property type="term" value="P:negative regulation of double-strand break repair"/>
    <property type="evidence" value="ECO:0000250"/>
    <property type="project" value="UniProtKB"/>
</dbReference>
<dbReference type="GO" id="GO:0016567">
    <property type="term" value="P:protein ubiquitination"/>
    <property type="evidence" value="ECO:0007669"/>
    <property type="project" value="UniProtKB-UniPathway"/>
</dbReference>
<dbReference type="CDD" id="cd21951">
    <property type="entry name" value="MIU_RNF169_C"/>
    <property type="match status" value="1"/>
</dbReference>
<dbReference type="CDD" id="cd16551">
    <property type="entry name" value="RING-HC_RNF169"/>
    <property type="match status" value="1"/>
</dbReference>
<dbReference type="Gene3D" id="3.30.40.10">
    <property type="entry name" value="Zinc/RING finger domain, C3HC4 (zinc finger)"/>
    <property type="match status" value="1"/>
</dbReference>
<dbReference type="InterPro" id="IPR051657">
    <property type="entry name" value="RNF168/RNF169_E3_ubiq-ligase"/>
</dbReference>
<dbReference type="InterPro" id="IPR001841">
    <property type="entry name" value="Znf_RING"/>
</dbReference>
<dbReference type="InterPro" id="IPR013083">
    <property type="entry name" value="Znf_RING/FYVE/PHD"/>
</dbReference>
<dbReference type="PANTHER" id="PTHR23328:SF2">
    <property type="entry name" value="E3 UBIQUITIN-PROTEIN LIGASE RNF169"/>
    <property type="match status" value="1"/>
</dbReference>
<dbReference type="PANTHER" id="PTHR23328">
    <property type="entry name" value="RING-TYPE DOMAIN-CONTAINING PROTEIN"/>
    <property type="match status" value="1"/>
</dbReference>
<dbReference type="SUPFAM" id="SSF57850">
    <property type="entry name" value="RING/U-box"/>
    <property type="match status" value="1"/>
</dbReference>
<dbReference type="PROSITE" id="PS50089">
    <property type="entry name" value="ZF_RING_2"/>
    <property type="match status" value="1"/>
</dbReference>
<gene>
    <name type="primary">Rnf169</name>
    <name type="synonym">Kiaa1991</name>
</gene>
<organism>
    <name type="scientific">Mus musculus</name>
    <name type="common">Mouse</name>
    <dbReference type="NCBI Taxonomy" id="10090"/>
    <lineage>
        <taxon>Eukaryota</taxon>
        <taxon>Metazoa</taxon>
        <taxon>Chordata</taxon>
        <taxon>Craniata</taxon>
        <taxon>Vertebrata</taxon>
        <taxon>Euteleostomi</taxon>
        <taxon>Mammalia</taxon>
        <taxon>Eutheria</taxon>
        <taxon>Euarchontoglires</taxon>
        <taxon>Glires</taxon>
        <taxon>Rodentia</taxon>
        <taxon>Myomorpha</taxon>
        <taxon>Muroidea</taxon>
        <taxon>Muridae</taxon>
        <taxon>Murinae</taxon>
        <taxon>Mus</taxon>
        <taxon>Mus</taxon>
    </lineage>
</organism>
<reference key="1">
    <citation type="journal article" date="2009" name="PLoS Biol.">
        <title>Lineage-specific biology revealed by a finished genome assembly of the mouse.</title>
        <authorList>
            <person name="Church D.M."/>
            <person name="Goodstadt L."/>
            <person name="Hillier L.W."/>
            <person name="Zody M.C."/>
            <person name="Goldstein S."/>
            <person name="She X."/>
            <person name="Bult C.J."/>
            <person name="Agarwala R."/>
            <person name="Cherry J.L."/>
            <person name="DiCuccio M."/>
            <person name="Hlavina W."/>
            <person name="Kapustin Y."/>
            <person name="Meric P."/>
            <person name="Maglott D."/>
            <person name="Birtle Z."/>
            <person name="Marques A.C."/>
            <person name="Graves T."/>
            <person name="Zhou S."/>
            <person name="Teague B."/>
            <person name="Potamousis K."/>
            <person name="Churas C."/>
            <person name="Place M."/>
            <person name="Herschleb J."/>
            <person name="Runnheim R."/>
            <person name="Forrest D."/>
            <person name="Amos-Landgraf J."/>
            <person name="Schwartz D.C."/>
            <person name="Cheng Z."/>
            <person name="Lindblad-Toh K."/>
            <person name="Eichler E.E."/>
            <person name="Ponting C.P."/>
        </authorList>
    </citation>
    <scope>NUCLEOTIDE SEQUENCE [LARGE SCALE GENOMIC DNA]</scope>
    <source>
        <strain>C57BL/6J</strain>
    </source>
</reference>
<reference key="2">
    <citation type="journal article" date="2004" name="DNA Res.">
        <title>Prediction of the coding sequences of mouse homologues of KIAA gene: IV. The complete nucleotide sequences of 500 mouse KIAA-homologous cDNAs identified by screening of terminal sequences of cDNA clones randomly sampled from size-fractionated libraries.</title>
        <authorList>
            <person name="Okazaki N."/>
            <person name="Kikuno R."/>
            <person name="Ohara R."/>
            <person name="Inamoto S."/>
            <person name="Koseki H."/>
            <person name="Hiraoka S."/>
            <person name="Saga Y."/>
            <person name="Seino S."/>
            <person name="Nishimura M."/>
            <person name="Kaisho T."/>
            <person name="Hoshino K."/>
            <person name="Kitamura H."/>
            <person name="Nagase T."/>
            <person name="Ohara O."/>
            <person name="Koga H."/>
        </authorList>
    </citation>
    <scope>NUCLEOTIDE SEQUENCE [LARGE SCALE MRNA] OF 159-694</scope>
    <source>
        <tissue>Brain</tissue>
    </source>
</reference>
<reference key="3">
    <citation type="journal article" date="2010" name="Cell">
        <title>A tissue-specific atlas of mouse protein phosphorylation and expression.</title>
        <authorList>
            <person name="Huttlin E.L."/>
            <person name="Jedrychowski M.P."/>
            <person name="Elias J.E."/>
            <person name="Goswami T."/>
            <person name="Rad R."/>
            <person name="Beausoleil S.A."/>
            <person name="Villen J."/>
            <person name="Haas W."/>
            <person name="Sowa M.E."/>
            <person name="Gygi S.P."/>
        </authorList>
    </citation>
    <scope>PHOSPHORYLATION [LARGE SCALE ANALYSIS] AT SER-679</scope>
    <scope>IDENTIFICATION BY MASS SPECTROMETRY [LARGE SCALE ANALYSIS]</scope>
    <source>
        <tissue>Brain</tissue>
        <tissue>Lung</tissue>
        <tissue>Spleen</tissue>
    </source>
</reference>
<accession>E9Q7F2</accession>
<accession>Q69Z47</accession>
<name>RN169_MOUSE</name>
<comment type="function">
    <text evidence="1">Probable E3 ubiquitin-protein ligase that acts as a regulator of double-strand breaks (DSBs) repair following DNA damage. Functions in a non-canonical fashion to harness RNF168-mediated protein recruitment to DSB-containing chromatin, thereby contributing to regulation of DSB repair pathway utilization. Once recruited to DSB repair sites by recognizing and binding ubiquitin catalyzed by RNF168, competes with TP53BP1 and BRCA1 for association with RNF168-modified chromatin, thereby favouring homologous recombination repair (HRR) and single-strand annealing (SSA) instead of non-homologous end joining (NHEJ) mediated by TP53BP1. E3 ubiquitin-protein ligase activity is not required for regulation of DSBs repair.</text>
</comment>
<comment type="catalytic activity">
    <reaction>
        <text>S-ubiquitinyl-[E2 ubiquitin-conjugating enzyme]-L-cysteine + [acceptor protein]-L-lysine = [E2 ubiquitin-conjugating enzyme]-L-cysteine + N(6)-ubiquitinyl-[acceptor protein]-L-lysine.</text>
        <dbReference type="EC" id="2.3.2.27"/>
    </reaction>
</comment>
<comment type="pathway">
    <text>Protein modification; protein ubiquitination.</text>
</comment>
<comment type="subunit">
    <text evidence="1">Interacts with DYRK1B.</text>
</comment>
<comment type="subcellular location">
    <subcellularLocation>
        <location evidence="1">Chromosome</location>
    </subcellularLocation>
    <subcellularLocation>
        <location evidence="1">Nucleus</location>
        <location evidence="1">Nucleoplasm</location>
    </subcellularLocation>
    <text evidence="1">Localizes to sites of double-strand breaks (DSBs) following DNA damage. Recruited to DSBs via recognition of RNF168-dependent ubiquitin products.</text>
</comment>
<comment type="domain">
    <text evidence="1">The MIU motif (motif interacting with ubiquitin) mediates the interaction with both 'Lys-48'- and 'Lys-63'-linked ubiquitin chains. The UMI motif also mediates interaction with ubiquitin. The specificity for different types of ubiquitin is mediated by juxtaposition of ubiquitin-binding motifs (MIU and UMI motifs) with LR motifs (LRMs).</text>
</comment>
<comment type="PTM">
    <text evidence="1">Phosphorylated by DYRK1A; phosphorylation increases RNF169 ability to block accumulation of TP53BP1 at the DSB sites.</text>
</comment>
<comment type="similarity">
    <text evidence="4">Belongs to the RNF169 family.</text>
</comment>
<sequence>MAAAGPSTRASSAAAAAALSRRGRRGRCDEMAAAKAGAPGPASSPALLVLRSAPRPEESGCTGCLETPGEVAALPCSHSRCRGCASRAAGPGCRRCRPRGSGWARRRARDDGQAAAELMGERARRGQPEPCRPRRDGGAAASGPRPEPEPLAEPEFIFRTPIKLSKPGELSEEYGCLRKLRGEKLQEEKDCDDQIHKLLQEDSEMGKRKADEQKKRDEAVVLKTSLEQCPARLSDSENEEPSRGQMMQTHRSAFVSKNSSCSLAFLAGKLNTKVQRSQSCSDTVQDRVRSRLRTAPPNRAKITTITPGSTPIIGVLLSTQNNRCLSAPDLTIEKRLPFGSLSSLASLHKPERSISPESNDSISEELNHFKPIVCSPCTPPKRLPDGRVLSPLIIKSTPRNLTRSLQKQTSYEASPRILKKWEQIFQERQIKKTLSKATLTSLAPEAGEEFPGSDTIHSSKERPSLAFNTRLSRVQVLSECAGPTSTALECFPSVNQTKVEQDCVRKRSREFSLETCHSSEHGGASSGPSLEREQCEESGSTVDATLVKTCISTVMKTAAVNSLLPKNDVLGGVLKTKQQLKTLNHFDLGNGILVNSLGEEPIPSLRRGRKRRCKTKHLEQNGVKKLRPPSSDMDLAPKDPGLLEVGRKLQQEEEDQQLALQSHRMFDSERRTMSRRKGSVDQYLLRSSSLAGAK</sequence>